<dbReference type="EC" id="5.1.1.1" evidence="1"/>
<dbReference type="EMBL" id="CP000612">
    <property type="protein sequence ID" value="ABO51369.1"/>
    <property type="molecule type" value="Genomic_DNA"/>
</dbReference>
<dbReference type="RefSeq" id="WP_011879162.1">
    <property type="nucleotide sequence ID" value="NC_009253.1"/>
</dbReference>
<dbReference type="SMR" id="A4J8G6"/>
<dbReference type="STRING" id="349161.Dred_2865"/>
<dbReference type="KEGG" id="drm:Dred_2865"/>
<dbReference type="eggNOG" id="COG0787">
    <property type="taxonomic scope" value="Bacteria"/>
</dbReference>
<dbReference type="HOGENOM" id="CLU_028393_2_2_9"/>
<dbReference type="OrthoDB" id="9813814at2"/>
<dbReference type="UniPathway" id="UPA00042">
    <property type="reaction ID" value="UER00497"/>
</dbReference>
<dbReference type="Proteomes" id="UP000001556">
    <property type="component" value="Chromosome"/>
</dbReference>
<dbReference type="GO" id="GO:0005829">
    <property type="term" value="C:cytosol"/>
    <property type="evidence" value="ECO:0007669"/>
    <property type="project" value="TreeGrafter"/>
</dbReference>
<dbReference type="GO" id="GO:0008784">
    <property type="term" value="F:alanine racemase activity"/>
    <property type="evidence" value="ECO:0007669"/>
    <property type="project" value="UniProtKB-UniRule"/>
</dbReference>
<dbReference type="GO" id="GO:0030170">
    <property type="term" value="F:pyridoxal phosphate binding"/>
    <property type="evidence" value="ECO:0007669"/>
    <property type="project" value="UniProtKB-UniRule"/>
</dbReference>
<dbReference type="GO" id="GO:0030632">
    <property type="term" value="P:D-alanine biosynthetic process"/>
    <property type="evidence" value="ECO:0007669"/>
    <property type="project" value="UniProtKB-UniRule"/>
</dbReference>
<dbReference type="GO" id="GO:0009252">
    <property type="term" value="P:peptidoglycan biosynthetic process"/>
    <property type="evidence" value="ECO:0007669"/>
    <property type="project" value="TreeGrafter"/>
</dbReference>
<dbReference type="CDD" id="cd00430">
    <property type="entry name" value="PLPDE_III_AR"/>
    <property type="match status" value="1"/>
</dbReference>
<dbReference type="FunFam" id="3.20.20.10:FF:000002">
    <property type="entry name" value="Alanine racemase"/>
    <property type="match status" value="1"/>
</dbReference>
<dbReference type="Gene3D" id="3.20.20.10">
    <property type="entry name" value="Alanine racemase"/>
    <property type="match status" value="1"/>
</dbReference>
<dbReference type="Gene3D" id="2.40.37.10">
    <property type="entry name" value="Lyase, Ornithine Decarboxylase, Chain A, domain 1"/>
    <property type="match status" value="1"/>
</dbReference>
<dbReference type="HAMAP" id="MF_01201">
    <property type="entry name" value="Ala_racemase"/>
    <property type="match status" value="1"/>
</dbReference>
<dbReference type="InterPro" id="IPR000821">
    <property type="entry name" value="Ala_racemase"/>
</dbReference>
<dbReference type="InterPro" id="IPR009006">
    <property type="entry name" value="Ala_racemase/Decarboxylase_C"/>
</dbReference>
<dbReference type="InterPro" id="IPR011079">
    <property type="entry name" value="Ala_racemase_C"/>
</dbReference>
<dbReference type="InterPro" id="IPR001608">
    <property type="entry name" value="Ala_racemase_N"/>
</dbReference>
<dbReference type="InterPro" id="IPR020622">
    <property type="entry name" value="Ala_racemase_pyridoxalP-BS"/>
</dbReference>
<dbReference type="InterPro" id="IPR029066">
    <property type="entry name" value="PLP-binding_barrel"/>
</dbReference>
<dbReference type="NCBIfam" id="TIGR00492">
    <property type="entry name" value="alr"/>
    <property type="match status" value="1"/>
</dbReference>
<dbReference type="PANTHER" id="PTHR30511">
    <property type="entry name" value="ALANINE RACEMASE"/>
    <property type="match status" value="1"/>
</dbReference>
<dbReference type="PANTHER" id="PTHR30511:SF0">
    <property type="entry name" value="ALANINE RACEMASE, CATABOLIC-RELATED"/>
    <property type="match status" value="1"/>
</dbReference>
<dbReference type="Pfam" id="PF00842">
    <property type="entry name" value="Ala_racemase_C"/>
    <property type="match status" value="1"/>
</dbReference>
<dbReference type="Pfam" id="PF01168">
    <property type="entry name" value="Ala_racemase_N"/>
    <property type="match status" value="1"/>
</dbReference>
<dbReference type="PRINTS" id="PR00992">
    <property type="entry name" value="ALARACEMASE"/>
</dbReference>
<dbReference type="SMART" id="SM01005">
    <property type="entry name" value="Ala_racemase_C"/>
    <property type="match status" value="1"/>
</dbReference>
<dbReference type="SUPFAM" id="SSF50621">
    <property type="entry name" value="Alanine racemase C-terminal domain-like"/>
    <property type="match status" value="1"/>
</dbReference>
<dbReference type="SUPFAM" id="SSF51419">
    <property type="entry name" value="PLP-binding barrel"/>
    <property type="match status" value="1"/>
</dbReference>
<dbReference type="PROSITE" id="PS00395">
    <property type="entry name" value="ALANINE_RACEMASE"/>
    <property type="match status" value="1"/>
</dbReference>
<sequence>MKEPIWAEINLEAIRHNIKEIRKMVGPNREIMAVVKANGYGHGAVPVARVALEAGATRLAVARLSEAQELRRAGLKVPILLLGYISPDQIGDALEYNVTLTVFRFDLAKKIAAIAQGRGQRATVHLKVDTGMGRIGFTPDEEGLAEITAVCALNGLDVEGIYTHFATADEQDKSYTRWQFKRFMLVLNRLEEQGITFSLRHCANSAAIMEFPETYLDLVRPGIILYGLYPSEEVDKGKLLLQPAMTLKARITHVKKVNSGTKISYGCTYTVPQETDIASLPLGYADGYPRLLSSKGQVLVKGKRARVVGRVCMDQCMVDVGHIAEVKVHDEVIIFGGAELPVEEVATWLGTINYEVVCWVGSRVPRVYIG</sequence>
<proteinExistence type="inferred from homology"/>
<feature type="chain" id="PRO_1000138595" description="Alanine racemase">
    <location>
        <begin position="1"/>
        <end position="370"/>
    </location>
</feature>
<feature type="active site" description="Proton acceptor; specific for D-alanine" evidence="1">
    <location>
        <position position="36"/>
    </location>
</feature>
<feature type="active site" description="Proton acceptor; specific for L-alanine" evidence="1">
    <location>
        <position position="265"/>
    </location>
</feature>
<feature type="binding site" evidence="1">
    <location>
        <position position="134"/>
    </location>
    <ligand>
        <name>substrate</name>
    </ligand>
</feature>
<feature type="binding site" evidence="1">
    <location>
        <position position="313"/>
    </location>
    <ligand>
        <name>substrate</name>
    </ligand>
</feature>
<feature type="modified residue" description="N6-(pyridoxal phosphate)lysine" evidence="1">
    <location>
        <position position="36"/>
    </location>
</feature>
<reference key="1">
    <citation type="submission" date="2007-03" db="EMBL/GenBank/DDBJ databases">
        <title>Complete sequence of Desulfotomaculum reducens MI-1.</title>
        <authorList>
            <consortium name="US DOE Joint Genome Institute"/>
            <person name="Copeland A."/>
            <person name="Lucas S."/>
            <person name="Lapidus A."/>
            <person name="Barry K."/>
            <person name="Detter J.C."/>
            <person name="Glavina del Rio T."/>
            <person name="Hammon N."/>
            <person name="Israni S."/>
            <person name="Dalin E."/>
            <person name="Tice H."/>
            <person name="Pitluck S."/>
            <person name="Sims D."/>
            <person name="Brettin T."/>
            <person name="Bruce D."/>
            <person name="Han C."/>
            <person name="Tapia R."/>
            <person name="Schmutz J."/>
            <person name="Larimer F."/>
            <person name="Land M."/>
            <person name="Hauser L."/>
            <person name="Kyrpides N."/>
            <person name="Kim E."/>
            <person name="Tebo B.M."/>
            <person name="Richardson P."/>
        </authorList>
    </citation>
    <scope>NUCLEOTIDE SEQUENCE [LARGE SCALE GENOMIC DNA]</scope>
    <source>
        <strain>ATCC BAA-1160 / DSM 100696 / MI-1</strain>
    </source>
</reference>
<protein>
    <recommendedName>
        <fullName evidence="1">Alanine racemase</fullName>
        <ecNumber evidence="1">5.1.1.1</ecNumber>
    </recommendedName>
</protein>
<keyword id="KW-0413">Isomerase</keyword>
<keyword id="KW-0663">Pyridoxal phosphate</keyword>
<keyword id="KW-1185">Reference proteome</keyword>
<evidence type="ECO:0000255" key="1">
    <source>
        <dbReference type="HAMAP-Rule" id="MF_01201"/>
    </source>
</evidence>
<gene>
    <name type="primary">alr</name>
    <name type="ordered locus">Dred_2865</name>
</gene>
<comment type="function">
    <text evidence="1">Catalyzes the interconversion of L-alanine and D-alanine. May also act on other amino acids.</text>
</comment>
<comment type="catalytic activity">
    <reaction evidence="1">
        <text>L-alanine = D-alanine</text>
        <dbReference type="Rhea" id="RHEA:20249"/>
        <dbReference type="ChEBI" id="CHEBI:57416"/>
        <dbReference type="ChEBI" id="CHEBI:57972"/>
        <dbReference type="EC" id="5.1.1.1"/>
    </reaction>
</comment>
<comment type="cofactor">
    <cofactor evidence="1">
        <name>pyridoxal 5'-phosphate</name>
        <dbReference type="ChEBI" id="CHEBI:597326"/>
    </cofactor>
</comment>
<comment type="pathway">
    <text evidence="1">Amino-acid biosynthesis; D-alanine biosynthesis; D-alanine from L-alanine: step 1/1.</text>
</comment>
<comment type="similarity">
    <text evidence="1">Belongs to the alanine racemase family.</text>
</comment>
<organism>
    <name type="scientific">Desulforamulus reducens (strain ATCC BAA-1160 / DSM 100696 / MI-1)</name>
    <name type="common">Desulfotomaculum reducens</name>
    <dbReference type="NCBI Taxonomy" id="349161"/>
    <lineage>
        <taxon>Bacteria</taxon>
        <taxon>Bacillati</taxon>
        <taxon>Bacillota</taxon>
        <taxon>Clostridia</taxon>
        <taxon>Eubacteriales</taxon>
        <taxon>Peptococcaceae</taxon>
        <taxon>Desulforamulus</taxon>
    </lineage>
</organism>
<accession>A4J8G6</accession>
<name>ALR_DESRM</name>